<reference key="1">
    <citation type="journal article" date="2003" name="Appl. Microbiol. Biotechnol.">
        <title>The Corynebacterium glutamicum genome: features and impacts on biotechnological processes.</title>
        <authorList>
            <person name="Ikeda M."/>
            <person name="Nakagawa S."/>
        </authorList>
    </citation>
    <scope>NUCLEOTIDE SEQUENCE [LARGE SCALE GENOMIC DNA]</scope>
    <source>
        <strain>ATCC 13032 / DSM 20300 / JCM 1318 / BCRC 11384 / CCUG 27702 / LMG 3730 / NBRC 12168 / NCIMB 10025 / NRRL B-2784 / 534</strain>
    </source>
</reference>
<reference key="2">
    <citation type="journal article" date="2003" name="J. Biotechnol.">
        <title>The complete Corynebacterium glutamicum ATCC 13032 genome sequence and its impact on the production of L-aspartate-derived amino acids and vitamins.</title>
        <authorList>
            <person name="Kalinowski J."/>
            <person name="Bathe B."/>
            <person name="Bartels D."/>
            <person name="Bischoff N."/>
            <person name="Bott M."/>
            <person name="Burkovski A."/>
            <person name="Dusch N."/>
            <person name="Eggeling L."/>
            <person name="Eikmanns B.J."/>
            <person name="Gaigalat L."/>
            <person name="Goesmann A."/>
            <person name="Hartmann M."/>
            <person name="Huthmacher K."/>
            <person name="Kraemer R."/>
            <person name="Linke B."/>
            <person name="McHardy A.C."/>
            <person name="Meyer F."/>
            <person name="Moeckel B."/>
            <person name="Pfefferle W."/>
            <person name="Puehler A."/>
            <person name="Rey D.A."/>
            <person name="Rueckert C."/>
            <person name="Rupp O."/>
            <person name="Sahm H."/>
            <person name="Wendisch V.F."/>
            <person name="Wiegraebe I."/>
            <person name="Tauch A."/>
        </authorList>
    </citation>
    <scope>NUCLEOTIDE SEQUENCE [LARGE SCALE GENOMIC DNA]</scope>
    <source>
        <strain>ATCC 13032 / DSM 20300 / JCM 1318 / BCRC 11384 / CCUG 27702 / LMG 3730 / NBRC 12168 / NCIMB 10025 / NRRL B-2784 / 534</strain>
    </source>
</reference>
<feature type="chain" id="PRO_0000141131" description="Ribose-phosphate pyrophosphokinase">
    <location>
        <begin position="1"/>
        <end position="325"/>
    </location>
</feature>
<feature type="active site" evidence="1">
    <location>
        <position position="202"/>
    </location>
</feature>
<feature type="binding site" evidence="1">
    <location>
        <begin position="45"/>
        <end position="47"/>
    </location>
    <ligand>
        <name>ATP</name>
        <dbReference type="ChEBI" id="CHEBI:30616"/>
    </ligand>
</feature>
<feature type="binding site" evidence="1">
    <location>
        <begin position="104"/>
        <end position="105"/>
    </location>
    <ligand>
        <name>ATP</name>
        <dbReference type="ChEBI" id="CHEBI:30616"/>
    </ligand>
</feature>
<feature type="binding site" evidence="1">
    <location>
        <position position="138"/>
    </location>
    <ligand>
        <name>Mg(2+)</name>
        <dbReference type="ChEBI" id="CHEBI:18420"/>
        <label>1</label>
    </ligand>
</feature>
<feature type="binding site" evidence="1">
    <location>
        <position position="178"/>
    </location>
    <ligand>
        <name>Mg(2+)</name>
        <dbReference type="ChEBI" id="CHEBI:18420"/>
        <label>2</label>
    </ligand>
</feature>
<feature type="binding site" evidence="1">
    <location>
        <position position="204"/>
    </location>
    <ligand>
        <name>D-ribose 5-phosphate</name>
        <dbReference type="ChEBI" id="CHEBI:78346"/>
    </ligand>
</feature>
<feature type="binding site" evidence="1">
    <location>
        <position position="230"/>
    </location>
    <ligand>
        <name>D-ribose 5-phosphate</name>
        <dbReference type="ChEBI" id="CHEBI:78346"/>
    </ligand>
</feature>
<feature type="binding site" evidence="1">
    <location>
        <begin position="234"/>
        <end position="238"/>
    </location>
    <ligand>
        <name>D-ribose 5-phosphate</name>
        <dbReference type="ChEBI" id="CHEBI:78346"/>
    </ligand>
</feature>
<dbReference type="EC" id="2.7.6.1" evidence="1"/>
<dbReference type="EMBL" id="BA000036">
    <property type="protein sequence ID" value="BAB98335.1"/>
    <property type="molecule type" value="Genomic_DNA"/>
</dbReference>
<dbReference type="EMBL" id="BX927150">
    <property type="protein sequence ID" value="CAF19649.1"/>
    <property type="molecule type" value="Genomic_DNA"/>
</dbReference>
<dbReference type="RefSeq" id="NP_600170.1">
    <property type="nucleotide sequence ID" value="NC_003450.3"/>
</dbReference>
<dbReference type="RefSeq" id="WP_003860060.1">
    <property type="nucleotide sequence ID" value="NC_006958.1"/>
</dbReference>
<dbReference type="SMR" id="Q8NRU9"/>
<dbReference type="STRING" id="196627.cg1075"/>
<dbReference type="KEGG" id="cgb:cg1075"/>
<dbReference type="KEGG" id="cgl:Cgl0942"/>
<dbReference type="PATRIC" id="fig|196627.13.peg.929"/>
<dbReference type="eggNOG" id="COG0462">
    <property type="taxonomic scope" value="Bacteria"/>
</dbReference>
<dbReference type="HOGENOM" id="CLU_033546_2_0_11"/>
<dbReference type="OrthoDB" id="9777067at2"/>
<dbReference type="BioCyc" id="CORYNE:G18NG-10512-MONOMER"/>
<dbReference type="UniPathway" id="UPA00087">
    <property type="reaction ID" value="UER00172"/>
</dbReference>
<dbReference type="Proteomes" id="UP000000582">
    <property type="component" value="Chromosome"/>
</dbReference>
<dbReference type="Proteomes" id="UP000001009">
    <property type="component" value="Chromosome"/>
</dbReference>
<dbReference type="GO" id="GO:0005737">
    <property type="term" value="C:cytoplasm"/>
    <property type="evidence" value="ECO:0007669"/>
    <property type="project" value="UniProtKB-SubCell"/>
</dbReference>
<dbReference type="GO" id="GO:0002189">
    <property type="term" value="C:ribose phosphate diphosphokinase complex"/>
    <property type="evidence" value="ECO:0007669"/>
    <property type="project" value="TreeGrafter"/>
</dbReference>
<dbReference type="GO" id="GO:0005524">
    <property type="term" value="F:ATP binding"/>
    <property type="evidence" value="ECO:0007669"/>
    <property type="project" value="UniProtKB-KW"/>
</dbReference>
<dbReference type="GO" id="GO:0016301">
    <property type="term" value="F:kinase activity"/>
    <property type="evidence" value="ECO:0007669"/>
    <property type="project" value="UniProtKB-KW"/>
</dbReference>
<dbReference type="GO" id="GO:0000287">
    <property type="term" value="F:magnesium ion binding"/>
    <property type="evidence" value="ECO:0007669"/>
    <property type="project" value="UniProtKB-UniRule"/>
</dbReference>
<dbReference type="GO" id="GO:0004749">
    <property type="term" value="F:ribose phosphate diphosphokinase activity"/>
    <property type="evidence" value="ECO:0007669"/>
    <property type="project" value="UniProtKB-UniRule"/>
</dbReference>
<dbReference type="GO" id="GO:0006015">
    <property type="term" value="P:5-phosphoribose 1-diphosphate biosynthetic process"/>
    <property type="evidence" value="ECO:0007669"/>
    <property type="project" value="UniProtKB-UniRule"/>
</dbReference>
<dbReference type="GO" id="GO:0006164">
    <property type="term" value="P:purine nucleotide biosynthetic process"/>
    <property type="evidence" value="ECO:0007669"/>
    <property type="project" value="TreeGrafter"/>
</dbReference>
<dbReference type="GO" id="GO:0009156">
    <property type="term" value="P:ribonucleoside monophosphate biosynthetic process"/>
    <property type="evidence" value="ECO:0007669"/>
    <property type="project" value="InterPro"/>
</dbReference>
<dbReference type="CDD" id="cd06223">
    <property type="entry name" value="PRTases_typeI"/>
    <property type="match status" value="1"/>
</dbReference>
<dbReference type="FunFam" id="3.40.50.2020:FF:000007">
    <property type="entry name" value="Ribose-phosphate pyrophosphokinase"/>
    <property type="match status" value="1"/>
</dbReference>
<dbReference type="Gene3D" id="3.40.50.2020">
    <property type="match status" value="2"/>
</dbReference>
<dbReference type="HAMAP" id="MF_00583_B">
    <property type="entry name" value="RibP_PPkinase_B"/>
    <property type="match status" value="1"/>
</dbReference>
<dbReference type="InterPro" id="IPR000842">
    <property type="entry name" value="PRib_PP_synth_CS"/>
</dbReference>
<dbReference type="InterPro" id="IPR029099">
    <property type="entry name" value="Pribosyltran_N"/>
</dbReference>
<dbReference type="InterPro" id="IPR000836">
    <property type="entry name" value="PRibTrfase_dom"/>
</dbReference>
<dbReference type="InterPro" id="IPR029057">
    <property type="entry name" value="PRTase-like"/>
</dbReference>
<dbReference type="InterPro" id="IPR005946">
    <property type="entry name" value="Rib-P_diPkinase"/>
</dbReference>
<dbReference type="InterPro" id="IPR037515">
    <property type="entry name" value="Rib-P_diPkinase_bac"/>
</dbReference>
<dbReference type="NCBIfam" id="NF002320">
    <property type="entry name" value="PRK01259.1"/>
    <property type="match status" value="1"/>
</dbReference>
<dbReference type="NCBIfam" id="NF002844">
    <property type="entry name" value="PRK03092.1"/>
    <property type="match status" value="1"/>
</dbReference>
<dbReference type="NCBIfam" id="TIGR01251">
    <property type="entry name" value="ribP_PPkin"/>
    <property type="match status" value="1"/>
</dbReference>
<dbReference type="PANTHER" id="PTHR10210">
    <property type="entry name" value="RIBOSE-PHOSPHATE DIPHOSPHOKINASE FAMILY MEMBER"/>
    <property type="match status" value="1"/>
</dbReference>
<dbReference type="PANTHER" id="PTHR10210:SF41">
    <property type="entry name" value="RIBOSE-PHOSPHATE PYROPHOSPHOKINASE 1, CHLOROPLASTIC"/>
    <property type="match status" value="1"/>
</dbReference>
<dbReference type="Pfam" id="PF14572">
    <property type="entry name" value="Pribosyl_synth"/>
    <property type="match status" value="1"/>
</dbReference>
<dbReference type="Pfam" id="PF13793">
    <property type="entry name" value="Pribosyltran_N"/>
    <property type="match status" value="1"/>
</dbReference>
<dbReference type="SMART" id="SM01400">
    <property type="entry name" value="Pribosyltran_N"/>
    <property type="match status" value="1"/>
</dbReference>
<dbReference type="SUPFAM" id="SSF53271">
    <property type="entry name" value="PRTase-like"/>
    <property type="match status" value="1"/>
</dbReference>
<dbReference type="PROSITE" id="PS00114">
    <property type="entry name" value="PRPP_SYNTHASE"/>
    <property type="match status" value="1"/>
</dbReference>
<comment type="function">
    <text evidence="1">Involved in the biosynthesis of the central metabolite phospho-alpha-D-ribosyl-1-pyrophosphate (PRPP) via the transfer of pyrophosphoryl group from ATP to 1-hydroxyl of ribose-5-phosphate (Rib-5-P).</text>
</comment>
<comment type="catalytic activity">
    <reaction evidence="1">
        <text>D-ribose 5-phosphate + ATP = 5-phospho-alpha-D-ribose 1-diphosphate + AMP + H(+)</text>
        <dbReference type="Rhea" id="RHEA:15609"/>
        <dbReference type="ChEBI" id="CHEBI:15378"/>
        <dbReference type="ChEBI" id="CHEBI:30616"/>
        <dbReference type="ChEBI" id="CHEBI:58017"/>
        <dbReference type="ChEBI" id="CHEBI:78346"/>
        <dbReference type="ChEBI" id="CHEBI:456215"/>
        <dbReference type="EC" id="2.7.6.1"/>
    </reaction>
</comment>
<comment type="cofactor">
    <cofactor evidence="1">
        <name>Mg(2+)</name>
        <dbReference type="ChEBI" id="CHEBI:18420"/>
    </cofactor>
    <text evidence="1">Binds 2 Mg(2+) ions per subunit.</text>
</comment>
<comment type="pathway">
    <text evidence="1">Metabolic intermediate biosynthesis; 5-phospho-alpha-D-ribose 1-diphosphate biosynthesis; 5-phospho-alpha-D-ribose 1-diphosphate from D-ribose 5-phosphate (route I): step 1/1.</text>
</comment>
<comment type="subunit">
    <text evidence="1">Homohexamer.</text>
</comment>
<comment type="subcellular location">
    <subcellularLocation>
        <location evidence="1">Cytoplasm</location>
    </subcellularLocation>
</comment>
<comment type="similarity">
    <text evidence="1">Belongs to the ribose-phosphate pyrophosphokinase family. Class I subfamily.</text>
</comment>
<evidence type="ECO:0000255" key="1">
    <source>
        <dbReference type="HAMAP-Rule" id="MF_00583"/>
    </source>
</evidence>
<sequence>MTAHWKQNQKNLMLFSGRAHPELAEAVAKELDVNVTPMTARDFANGEIYVRFEESVRGSDCFVLQSHTQPLNKWLMEQLLMIDALKRGSAKRITAILPFYPYARQDKKHRGREPISARLIADLMLTAGADRIVSVDLHTDQIQGFFDGPVDHMHAMPILTDHIKENYNLDNICVVSPDAGRVKVAEKWANTLGDAPMAFVHKTRSTEVANQVVANRVVGDVDGKDCVLLDDMIDTGGTIAGAVGVLKKAGAKSVVIACTHGVFSDPARERLSACGAEEVITTDTLPQSTEGWSNLTVLSIAPLLARTINEIFENGSVTTLFEGEA</sequence>
<accession>Q8NRU9</accession>
<organism>
    <name type="scientific">Corynebacterium glutamicum (strain ATCC 13032 / DSM 20300 / JCM 1318 / BCRC 11384 / CCUG 27702 / LMG 3730 / NBRC 12168 / NCIMB 10025 / NRRL B-2784 / 534)</name>
    <dbReference type="NCBI Taxonomy" id="196627"/>
    <lineage>
        <taxon>Bacteria</taxon>
        <taxon>Bacillati</taxon>
        <taxon>Actinomycetota</taxon>
        <taxon>Actinomycetes</taxon>
        <taxon>Mycobacteriales</taxon>
        <taxon>Corynebacteriaceae</taxon>
        <taxon>Corynebacterium</taxon>
    </lineage>
</organism>
<gene>
    <name evidence="1" type="primary">prs</name>
    <name type="synonym">prsA</name>
    <name type="ordered locus">Cgl0942</name>
    <name type="ordered locus">cg1075</name>
</gene>
<proteinExistence type="inferred from homology"/>
<keyword id="KW-0067">ATP-binding</keyword>
<keyword id="KW-0963">Cytoplasm</keyword>
<keyword id="KW-0418">Kinase</keyword>
<keyword id="KW-0460">Magnesium</keyword>
<keyword id="KW-0479">Metal-binding</keyword>
<keyword id="KW-0545">Nucleotide biosynthesis</keyword>
<keyword id="KW-0547">Nucleotide-binding</keyword>
<keyword id="KW-1185">Reference proteome</keyword>
<keyword id="KW-0808">Transferase</keyword>
<protein>
    <recommendedName>
        <fullName evidence="1">Ribose-phosphate pyrophosphokinase</fullName>
        <shortName evidence="1">RPPK</shortName>
        <ecNumber evidence="1">2.7.6.1</ecNumber>
    </recommendedName>
    <alternativeName>
        <fullName evidence="1">5-phospho-D-ribosyl alpha-1-diphosphate synthase</fullName>
    </alternativeName>
    <alternativeName>
        <fullName evidence="1">Phosphoribosyl diphosphate synthase</fullName>
    </alternativeName>
    <alternativeName>
        <fullName evidence="1">Phosphoribosyl pyrophosphate synthase</fullName>
        <shortName evidence="1">P-Rib-PP synthase</shortName>
        <shortName evidence="1">PRPP synthase</shortName>
        <shortName evidence="1">PRPPase</shortName>
    </alternativeName>
</protein>
<name>KPRS_CORGL</name>